<sequence length="168" mass="19137">MDRVGKYGLFIKRISPKDADITKESLETVNNMLVFLAEKLTKQANIIIDQKTLRHDAFLWLLTDIQGELGKHSQDFANSVLYGEKELVFPTKRTENLMRKNTCLRISQSAVKTLTAILEYFCGQIMEASFSQAKKSKRKRIRPIDIEAAISQDKELHSMFGKGVISGR</sequence>
<evidence type="ECO:0000269" key="1">
    <source>
    </source>
</evidence>
<evidence type="ECO:0000303" key="2">
    <source>
    </source>
</evidence>
<evidence type="ECO:0000312" key="3">
    <source>
        <dbReference type="EMBL" id="AIT54762.1"/>
    </source>
</evidence>
<reference key="1">
    <citation type="journal article" date="2014" name="J. Virol.">
        <title>Genome analysis of the first Marseilleviridae representative from Australia indicates that most of its genes contribute to virus fitness.</title>
        <authorList>
            <person name="Doutre G."/>
            <person name="Philippe N."/>
            <person name="Abergel C."/>
            <person name="Claverie J.M."/>
        </authorList>
    </citation>
    <scope>NUCLEOTIDE SEQUENCE [LARGE SCALE GENOMIC DNA]</scope>
</reference>
<reference key="2">
    <citation type="journal article" date="2021" name="Cell">
        <title>Virus-encoded histone doublets are essential and form nucleosome-like structures.</title>
        <authorList>
            <person name="Liu Y."/>
            <person name="Bisio H."/>
            <person name="Toner C.M."/>
            <person name="Jeudy S."/>
            <person name="Philippe N."/>
            <person name="Zhou K."/>
            <person name="Bowerman S."/>
            <person name="White A."/>
            <person name="Edwards G."/>
            <person name="Abergel C."/>
            <person name="Luger K."/>
        </authorList>
    </citation>
    <scope>FUNCTION</scope>
    <scope>SUBCELLULAR LOCATION</scope>
    <scope>INDUCTION</scope>
</reference>
<proteinExistence type="evidence at transcript level"/>
<organism>
    <name type="scientific">Melbournevirus</name>
    <name type="common">MelV</name>
    <dbReference type="NCBI Taxonomy" id="1560514"/>
    <lineage>
        <taxon>Viruses</taxon>
        <taxon>Varidnaviria</taxon>
        <taxon>Bamfordvirae</taxon>
        <taxon>Nucleocytoviricota</taxon>
        <taxon>Megaviricetes</taxon>
        <taxon>Pimascovirales</taxon>
        <taxon>Marseilleviridae</taxon>
        <taxon>Marseillevirus</taxon>
    </lineage>
</organism>
<keyword id="KW-0226">DNA condensation</keyword>
<keyword id="KW-1035">Host cytoplasm</keyword>
<keyword id="KW-1048">Host nucleus</keyword>
<keyword id="KW-0946">Virion</keyword>
<feature type="chain" id="PRO_0000454839" description="Histone doublet miniH2B-H2A">
    <location>
        <begin position="1"/>
        <end position="168"/>
    </location>
</feature>
<name>H2A_MELV</name>
<protein>
    <recommendedName>
        <fullName evidence="2">Histone doublet miniH2B-H2A</fullName>
    </recommendedName>
    <alternativeName>
        <fullName evidence="2">Histone miniH2B-H2A fusion protein</fullName>
    </alternativeName>
    <alternativeName>
        <fullName evidence="2">MV-miniH2B-H2A</fullName>
    </alternativeName>
</protein>
<accession>A0A097I1R9</accession>
<gene>
    <name evidence="3" type="ORF">MEL_149</name>
</gene>
<comment type="function">
    <text evidence="1">Histone-like protein that is recruited to viral factories during viral replication and participates in viral DNA packaging and virion production probably by forming unstable nucleosome-like particles (PubMed:34297924). May compact the viral DNA (PubMed:34297924).</text>
</comment>
<comment type="subcellular location">
    <subcellularLocation>
        <location evidence="1">Host nucleus</location>
    </subcellularLocation>
    <subcellularLocation>
        <location evidence="1">Host cytoplasm</location>
    </subcellularLocation>
    <subcellularLocation>
        <location evidence="1">Virion</location>
    </subcellularLocation>
    <text evidence="1">Localize to cytoplasmic viral factories after virus infection (PubMed:34297924). Also present in the nucleus but at much lower concentration (PubMed:34297924). The viral histones that localize in the nucleus apparently do not interact with host genomic DNA and can leave the nucleus to associate with the viral factory (PubMed:34297924).</text>
</comment>
<comment type="induction">
    <text evidence="1">Expression of viral histones begins 2-4 hpi and continues along the infectious cycle.</text>
</comment>
<dbReference type="EMBL" id="KM275475">
    <property type="protein sequence ID" value="AIT54762.1"/>
    <property type="molecule type" value="Genomic_DNA"/>
</dbReference>
<dbReference type="RefSeq" id="YP_009094650.1">
    <property type="nucleotide sequence ID" value="NC_025412.1"/>
</dbReference>
<dbReference type="SMR" id="A0A097I1R9"/>
<dbReference type="GeneID" id="21012170"/>
<dbReference type="KEGG" id="vg:21012170"/>
<dbReference type="Proteomes" id="UP000207668">
    <property type="component" value="Genome"/>
</dbReference>
<dbReference type="GO" id="GO:0030430">
    <property type="term" value="C:host cell cytoplasm"/>
    <property type="evidence" value="ECO:0007669"/>
    <property type="project" value="UniProtKB-SubCell"/>
</dbReference>
<dbReference type="GO" id="GO:0042025">
    <property type="term" value="C:host cell nucleus"/>
    <property type="evidence" value="ECO:0007669"/>
    <property type="project" value="UniProtKB-SubCell"/>
</dbReference>
<dbReference type="GO" id="GO:0044423">
    <property type="term" value="C:virion component"/>
    <property type="evidence" value="ECO:0007669"/>
    <property type="project" value="UniProtKB-KW"/>
</dbReference>
<dbReference type="GO" id="GO:0003677">
    <property type="term" value="F:DNA binding"/>
    <property type="evidence" value="ECO:0007669"/>
    <property type="project" value="InterPro"/>
</dbReference>
<dbReference type="GO" id="GO:0046982">
    <property type="term" value="F:protein heterodimerization activity"/>
    <property type="evidence" value="ECO:0007669"/>
    <property type="project" value="InterPro"/>
</dbReference>
<dbReference type="GO" id="GO:0030527">
    <property type="term" value="F:structural constituent of chromatin"/>
    <property type="evidence" value="ECO:0007669"/>
    <property type="project" value="InterPro"/>
</dbReference>
<dbReference type="GO" id="GO:0030261">
    <property type="term" value="P:chromosome condensation"/>
    <property type="evidence" value="ECO:0007669"/>
    <property type="project" value="UniProtKB-KW"/>
</dbReference>
<dbReference type="Gene3D" id="1.10.20.10">
    <property type="entry name" value="Histone, subunit A"/>
    <property type="match status" value="1"/>
</dbReference>
<dbReference type="InterPro" id="IPR009072">
    <property type="entry name" value="Histone-fold"/>
</dbReference>
<dbReference type="InterPro" id="IPR002119">
    <property type="entry name" value="Histone_H2A"/>
</dbReference>
<dbReference type="InterPro" id="IPR007125">
    <property type="entry name" value="Histone_H2A/H2B/H3"/>
</dbReference>
<dbReference type="PANTHER" id="PTHR23430">
    <property type="entry name" value="HISTONE H2A"/>
    <property type="match status" value="1"/>
</dbReference>
<dbReference type="Pfam" id="PF00125">
    <property type="entry name" value="Histone"/>
    <property type="match status" value="1"/>
</dbReference>
<dbReference type="SUPFAM" id="SSF47113">
    <property type="entry name" value="Histone-fold"/>
    <property type="match status" value="1"/>
</dbReference>